<keyword id="KW-0067">ATP-binding</keyword>
<keyword id="KW-0238">DNA-binding</keyword>
<keyword id="KW-0255">Endonuclease</keyword>
<keyword id="KW-0378">Hydrolase</keyword>
<keyword id="KW-0540">Nuclease</keyword>
<keyword id="KW-0547">Nucleotide-binding</keyword>
<keyword id="KW-0680">Restriction system</keyword>
<evidence type="ECO:0000250" key="1">
    <source>
        <dbReference type="UniProtKB" id="P08956"/>
    </source>
</evidence>
<evidence type="ECO:0000255" key="2">
    <source>
        <dbReference type="PROSITE-ProRule" id="PRU00541"/>
    </source>
</evidence>
<evidence type="ECO:0000303" key="3">
    <source>
    </source>
</evidence>
<evidence type="ECO:0000305" key="4"/>
<proteinExistence type="inferred from homology"/>
<accession>Q6GCT1</accession>
<comment type="function">
    <text evidence="1 3">The restriction (R) subunit of a type I restriction enzyme that recognizes an undetermined sequence and cleaves a random distance away. Subunit R is required for both nuclease and ATPase activities, but not for modification. After locating a non-methylated recognition site, the enzyme complex serves as a molecular motor that translocates DNA in an ATP-dependent manner until a collision occurs that triggers cleavage.</text>
</comment>
<comment type="catalytic activity">
    <reaction evidence="1">
        <text>Endonucleolytic cleavage of DNA to give random double-stranded fragments with terminal 5'-phosphates, ATP is simultaneously hydrolyzed.</text>
        <dbReference type="EC" id="3.1.21.3"/>
    </reaction>
</comment>
<comment type="subunit">
    <text evidence="1">The type I restriction/modification system is composed of three polypeptides R, M and S.</text>
</comment>
<comment type="miscellaneous">
    <text evidence="1">Type I restriction and modification enzymes are complex, multifunctional systems which require ATP, S-adenosyl methionine and magnesium as cofactors and, in addition to their endonucleolytic and methylase activities, are potent DNA-dependent ATPases.</text>
</comment>
<comment type="similarity">
    <text evidence="4">Belongs to the HsdR family.</text>
</comment>
<sequence length="929" mass="109253">MAYQSEYALENEMMNQLEQLGYERVTIRDNKQLLDNFRTILNERHADKLEGNPLTDKEFQRLLTMIDGKSIFESARILRDKLPLRRDDESEVYLSFLDTKSWCKNKFQVTNQVSVEDTYKARYDVTILINGLPLVQVELKRRGIDINEAFNQVKRYRKQNYTGLFRYIQMFIISNGVETRYFSNNDSELLKSHMFYWSDKQNNRINTLQSFAESFMRPCQLAKMISRYMIINETDRILMAMRPYQVYAVEALIQQATETGNNGYVWHTTGSGKTLTSFKASQILSQQDDIKKVIFLVDRKDLDSQTEEEFNKFAKGAVDKTFNTSQLVRQLNDKSLPLIVTTIQKMAKAIQGNAHLLEQYKTNKVVFIIDECHRSQFGDMHRLVKQHFKNAQYFGFTGTPRFPENSSQDGRTTADIFGRCLHTYLIRDAIHDGNVLGFSVDYINTFKNKALKAEDNSMVEAIDTEEVWLADKRVELVTRHIINNHDKYTRNRQYSSIFTVQSIHALIKYYETFKRLNKKLEQPLTIAGIFTFKPNEDDRDGEVPYHSREKLEIMISDYNKKFETNFSTDTTNEYFNHISKNVKKGVKDSKIDILIVVNMFLTGFDSKVLNTLYVDKNLMYHDLIQAYSRTNRVEKESKPFGKIVNYRDLKKETDDALRVFSQTNDTDTILMRSYEEYKKEFMDAYRELKMIVPTPHMVDDIQDEEELKRFVEAYRLLAKIILRLKAFDEFEFTIDEIGMDEQENEDYKSKYLAVYDQVKRATAEKNKVSILNDIDFEIEMMRNDTINVNYIMNILRQIDLEDKAEQRRNQEQIRRILDHADDPTLRLKRDLIREFIDNVVPSLNKDDDIDQEYVNFESIKKEAEFKGFAGERSIDEQALKTISNDYQYSGVVNPHHLKKMIGDLPLKEKRKARKAIESFVAETTEKYGV</sequence>
<protein>
    <recommendedName>
        <fullName evidence="3">Type I restriction enzyme SauMSSORF170P endonuclease subunit</fullName>
        <shortName>R protein</shortName>
        <shortName evidence="3">SauMSSORF170P</shortName>
        <ecNumber evidence="1">3.1.21.3</ecNumber>
    </recommendedName>
    <alternativeName>
        <fullName>Type-1 restriction enzyme R protein</fullName>
    </alternativeName>
</protein>
<gene>
    <name type="primary">hsdR</name>
    <name type="ordered locus">SAS0170</name>
</gene>
<reference key="1">
    <citation type="journal article" date="2004" name="Proc. Natl. Acad. Sci. U.S.A.">
        <title>Complete genomes of two clinical Staphylococcus aureus strains: evidence for the rapid evolution of virulence and drug resistance.</title>
        <authorList>
            <person name="Holden M.T.G."/>
            <person name="Feil E.J."/>
            <person name="Lindsay J.A."/>
            <person name="Peacock S.J."/>
            <person name="Day N.P.J."/>
            <person name="Enright M.C."/>
            <person name="Foster T.J."/>
            <person name="Moore C.E."/>
            <person name="Hurst L."/>
            <person name="Atkin R."/>
            <person name="Barron A."/>
            <person name="Bason N."/>
            <person name="Bentley S.D."/>
            <person name="Chillingworth C."/>
            <person name="Chillingworth T."/>
            <person name="Churcher C."/>
            <person name="Clark L."/>
            <person name="Corton C."/>
            <person name="Cronin A."/>
            <person name="Doggett J."/>
            <person name="Dowd L."/>
            <person name="Feltwell T."/>
            <person name="Hance Z."/>
            <person name="Harris B."/>
            <person name="Hauser H."/>
            <person name="Holroyd S."/>
            <person name="Jagels K."/>
            <person name="James K.D."/>
            <person name="Lennard N."/>
            <person name="Line A."/>
            <person name="Mayes R."/>
            <person name="Moule S."/>
            <person name="Mungall K."/>
            <person name="Ormond D."/>
            <person name="Quail M.A."/>
            <person name="Rabbinowitsch E."/>
            <person name="Rutherford K.M."/>
            <person name="Sanders M."/>
            <person name="Sharp S."/>
            <person name="Simmonds M."/>
            <person name="Stevens K."/>
            <person name="Whitehead S."/>
            <person name="Barrell B.G."/>
            <person name="Spratt B.G."/>
            <person name="Parkhill J."/>
        </authorList>
    </citation>
    <scope>NUCLEOTIDE SEQUENCE [LARGE SCALE GENOMIC DNA]</scope>
    <source>
        <strain>MSSA476</strain>
    </source>
</reference>
<reference key="2">
    <citation type="journal article" date="2003" name="Nucleic Acids Res.">
        <title>A nomenclature for restriction enzymes, DNA methyltransferases, homing endonucleases and their genes.</title>
        <authorList>
            <person name="Roberts R.J."/>
            <person name="Belfort M."/>
            <person name="Bestor T."/>
            <person name="Bhagwat A.S."/>
            <person name="Bickle T.A."/>
            <person name="Bitinaite J."/>
            <person name="Blumenthal R.M."/>
            <person name="Degtyarev S.K."/>
            <person name="Dryden D.T."/>
            <person name="Dybvig K."/>
            <person name="Firman K."/>
            <person name="Gromova E.S."/>
            <person name="Gumport R.I."/>
            <person name="Halford S.E."/>
            <person name="Hattman S."/>
            <person name="Heitman J."/>
            <person name="Hornby D.P."/>
            <person name="Janulaitis A."/>
            <person name="Jeltsch A."/>
            <person name="Josephsen J."/>
            <person name="Kiss A."/>
            <person name="Klaenhammer T.R."/>
            <person name="Kobayashi I."/>
            <person name="Kong H."/>
            <person name="Krueger D.H."/>
            <person name="Lacks S."/>
            <person name="Marinus M.G."/>
            <person name="Miyahara M."/>
            <person name="Morgan R.D."/>
            <person name="Murray N.E."/>
            <person name="Nagaraja V."/>
            <person name="Piekarowicz A."/>
            <person name="Pingoud A."/>
            <person name="Raleigh E."/>
            <person name="Rao D.N."/>
            <person name="Reich N."/>
            <person name="Repin V.E."/>
            <person name="Selker E.U."/>
            <person name="Shaw P.C."/>
            <person name="Stein D.C."/>
            <person name="Stoddard B.L."/>
            <person name="Szybalski W."/>
            <person name="Trautner T.A."/>
            <person name="Van Etten J.L."/>
            <person name="Vitor J.M."/>
            <person name="Wilson G.G."/>
            <person name="Xu S.Y."/>
        </authorList>
    </citation>
    <scope>NOMENCLATURE</scope>
    <scope>SUBTYPE</scope>
</reference>
<feature type="chain" id="PRO_0000077269" description="Type I restriction enzyme SauMSSORF170P endonuclease subunit">
    <location>
        <begin position="1"/>
        <end position="929"/>
    </location>
</feature>
<feature type="domain" description="Helicase ATP-binding" evidence="2">
    <location>
        <begin position="254"/>
        <end position="418"/>
    </location>
</feature>
<feature type="binding site" evidence="2">
    <location>
        <begin position="268"/>
        <end position="274"/>
    </location>
    <ligand>
        <name>ATP</name>
        <dbReference type="ChEBI" id="CHEBI:30616"/>
    </ligand>
</feature>
<dbReference type="EC" id="3.1.21.3" evidence="1"/>
<dbReference type="EMBL" id="BX571857">
    <property type="protein sequence ID" value="CAG41938.1"/>
    <property type="molecule type" value="Genomic_DNA"/>
</dbReference>
<dbReference type="RefSeq" id="WP_000331353.1">
    <property type="nucleotide sequence ID" value="NC_002953.3"/>
</dbReference>
<dbReference type="SMR" id="Q6GCT1"/>
<dbReference type="REBASE" id="9413">
    <property type="entry name" value="SauMSSORF170P"/>
</dbReference>
<dbReference type="KEGG" id="sas:SAS0170"/>
<dbReference type="HOGENOM" id="CLU_004848_1_0_9"/>
<dbReference type="PRO" id="PR:Q6GCT1"/>
<dbReference type="GO" id="GO:0005524">
    <property type="term" value="F:ATP binding"/>
    <property type="evidence" value="ECO:0007669"/>
    <property type="project" value="UniProtKB-KW"/>
</dbReference>
<dbReference type="GO" id="GO:0003677">
    <property type="term" value="F:DNA binding"/>
    <property type="evidence" value="ECO:0007669"/>
    <property type="project" value="UniProtKB-KW"/>
</dbReference>
<dbReference type="GO" id="GO:0009035">
    <property type="term" value="F:type I site-specific deoxyribonuclease activity"/>
    <property type="evidence" value="ECO:0007669"/>
    <property type="project" value="UniProtKB-EC"/>
</dbReference>
<dbReference type="GO" id="GO:0009307">
    <property type="term" value="P:DNA restriction-modification system"/>
    <property type="evidence" value="ECO:0007669"/>
    <property type="project" value="UniProtKB-KW"/>
</dbReference>
<dbReference type="CDD" id="cd18030">
    <property type="entry name" value="DEXHc_RE_I_HsdR"/>
    <property type="match status" value="1"/>
</dbReference>
<dbReference type="CDD" id="cd22332">
    <property type="entry name" value="HsdR_N"/>
    <property type="match status" value="1"/>
</dbReference>
<dbReference type="CDD" id="cd18800">
    <property type="entry name" value="SF2_C_EcoR124I-like"/>
    <property type="match status" value="1"/>
</dbReference>
<dbReference type="Gene3D" id="1.20.58.2040">
    <property type="match status" value="1"/>
</dbReference>
<dbReference type="Gene3D" id="3.90.1570.50">
    <property type="match status" value="1"/>
</dbReference>
<dbReference type="Gene3D" id="3.40.50.300">
    <property type="entry name" value="P-loop containing nucleotide triphosphate hydrolases"/>
    <property type="match status" value="2"/>
</dbReference>
<dbReference type="InterPro" id="IPR014001">
    <property type="entry name" value="Helicase_ATP-bd"/>
</dbReference>
<dbReference type="InterPro" id="IPR055180">
    <property type="entry name" value="HsdR_RecA-like_helicase_dom_2"/>
</dbReference>
<dbReference type="InterPro" id="IPR027417">
    <property type="entry name" value="P-loop_NTPase"/>
</dbReference>
<dbReference type="InterPro" id="IPR007409">
    <property type="entry name" value="Restrct_endonuc_type1_HsdR_N"/>
</dbReference>
<dbReference type="InterPro" id="IPR004473">
    <property type="entry name" value="Restrct_endonuc_typeI_HsdR"/>
</dbReference>
<dbReference type="InterPro" id="IPR040980">
    <property type="entry name" value="SWI2_SNF2"/>
</dbReference>
<dbReference type="InterPro" id="IPR051268">
    <property type="entry name" value="Type-I_R_enzyme_R_subunit"/>
</dbReference>
<dbReference type="InterPro" id="IPR022625">
    <property type="entry name" value="TypeI_RM_Rsu_C"/>
</dbReference>
<dbReference type="NCBIfam" id="TIGR00348">
    <property type="entry name" value="hsdR"/>
    <property type="match status" value="1"/>
</dbReference>
<dbReference type="PANTHER" id="PTHR30195:SF16">
    <property type="entry name" value="TYPE I RESTRICTION ENZYME ENDONUCLEASE SUBUNIT"/>
    <property type="match status" value="1"/>
</dbReference>
<dbReference type="PANTHER" id="PTHR30195">
    <property type="entry name" value="TYPE I SITE-SPECIFIC DEOXYRIBONUCLEASE PROTEIN SUBUNIT M AND R"/>
    <property type="match status" value="1"/>
</dbReference>
<dbReference type="Pfam" id="PF12008">
    <property type="entry name" value="EcoR124_C"/>
    <property type="match status" value="1"/>
</dbReference>
<dbReference type="Pfam" id="PF04313">
    <property type="entry name" value="HSDR_N"/>
    <property type="match status" value="1"/>
</dbReference>
<dbReference type="Pfam" id="PF18766">
    <property type="entry name" value="SWI2_SNF2"/>
    <property type="match status" value="1"/>
</dbReference>
<dbReference type="Pfam" id="PF22679">
    <property type="entry name" value="T1R_D3-like"/>
    <property type="match status" value="1"/>
</dbReference>
<dbReference type="SMART" id="SM00487">
    <property type="entry name" value="DEXDc"/>
    <property type="match status" value="1"/>
</dbReference>
<dbReference type="SUPFAM" id="SSF52540">
    <property type="entry name" value="P-loop containing nucleoside triphosphate hydrolases"/>
    <property type="match status" value="1"/>
</dbReference>
<dbReference type="PROSITE" id="PS51192">
    <property type="entry name" value="HELICASE_ATP_BIND_1"/>
    <property type="match status" value="1"/>
</dbReference>
<organism>
    <name type="scientific">Staphylococcus aureus (strain MSSA476)</name>
    <dbReference type="NCBI Taxonomy" id="282459"/>
    <lineage>
        <taxon>Bacteria</taxon>
        <taxon>Bacillati</taxon>
        <taxon>Bacillota</taxon>
        <taxon>Bacilli</taxon>
        <taxon>Bacillales</taxon>
        <taxon>Staphylococcaceae</taxon>
        <taxon>Staphylococcus</taxon>
    </lineage>
</organism>
<name>HSDR_STAAS</name>